<geneLocation type="chloroplast"/>
<dbReference type="EC" id="7.1.1.-" evidence="1"/>
<dbReference type="EMBL" id="AF383871">
    <property type="protein sequence ID" value="AAN61812.1"/>
    <property type="molecule type" value="Genomic_DNA"/>
</dbReference>
<dbReference type="SMR" id="Q8HVJ2"/>
<dbReference type="GO" id="GO:0009535">
    <property type="term" value="C:chloroplast thylakoid membrane"/>
    <property type="evidence" value="ECO:0007669"/>
    <property type="project" value="UniProtKB-SubCell"/>
</dbReference>
<dbReference type="GO" id="GO:0051539">
    <property type="term" value="F:4 iron, 4 sulfur cluster binding"/>
    <property type="evidence" value="ECO:0007669"/>
    <property type="project" value="UniProtKB-KW"/>
</dbReference>
<dbReference type="GO" id="GO:0005506">
    <property type="term" value="F:iron ion binding"/>
    <property type="evidence" value="ECO:0007669"/>
    <property type="project" value="UniProtKB-UniRule"/>
</dbReference>
<dbReference type="GO" id="GO:0008137">
    <property type="term" value="F:NADH dehydrogenase (ubiquinone) activity"/>
    <property type="evidence" value="ECO:0007669"/>
    <property type="project" value="InterPro"/>
</dbReference>
<dbReference type="GO" id="GO:0048038">
    <property type="term" value="F:quinone binding"/>
    <property type="evidence" value="ECO:0007669"/>
    <property type="project" value="UniProtKB-KW"/>
</dbReference>
<dbReference type="GO" id="GO:0019684">
    <property type="term" value="P:photosynthesis, light reaction"/>
    <property type="evidence" value="ECO:0007669"/>
    <property type="project" value="UniProtKB-UniRule"/>
</dbReference>
<dbReference type="FunFam" id="3.30.70.3270:FF:000006">
    <property type="entry name" value="NAD(P)H-quinone oxidoreductase subunit I, chloroplastic"/>
    <property type="match status" value="1"/>
</dbReference>
<dbReference type="Gene3D" id="3.30.70.3270">
    <property type="match status" value="1"/>
</dbReference>
<dbReference type="HAMAP" id="MF_01351">
    <property type="entry name" value="NDH1_NuoI"/>
    <property type="match status" value="1"/>
</dbReference>
<dbReference type="InterPro" id="IPR017896">
    <property type="entry name" value="4Fe4S_Fe-S-bd"/>
</dbReference>
<dbReference type="InterPro" id="IPR017900">
    <property type="entry name" value="4Fe4S_Fe_S_CS"/>
</dbReference>
<dbReference type="InterPro" id="IPR010226">
    <property type="entry name" value="NADH_quinone_OxRdtase_chainI"/>
</dbReference>
<dbReference type="InterPro" id="IPR004497">
    <property type="entry name" value="NDHI"/>
</dbReference>
<dbReference type="NCBIfam" id="TIGR00403">
    <property type="entry name" value="ndhI"/>
    <property type="match status" value="1"/>
</dbReference>
<dbReference type="NCBIfam" id="TIGR01971">
    <property type="entry name" value="NuoI"/>
    <property type="match status" value="1"/>
</dbReference>
<dbReference type="NCBIfam" id="NF004537">
    <property type="entry name" value="PRK05888.1-3"/>
    <property type="match status" value="1"/>
</dbReference>
<dbReference type="PANTHER" id="PTHR47275">
    <property type="entry name" value="NAD(P)H-QUINONE OXIDOREDUCTASE SUBUNIT I, CHLOROPLASTIC"/>
    <property type="match status" value="1"/>
</dbReference>
<dbReference type="PANTHER" id="PTHR47275:SF1">
    <property type="entry name" value="NAD(P)H-QUINONE OXIDOREDUCTASE SUBUNIT I, CHLOROPLASTIC"/>
    <property type="match status" value="1"/>
</dbReference>
<dbReference type="Pfam" id="PF00037">
    <property type="entry name" value="Fer4"/>
    <property type="match status" value="2"/>
</dbReference>
<dbReference type="SUPFAM" id="SSF54862">
    <property type="entry name" value="4Fe-4S ferredoxins"/>
    <property type="match status" value="1"/>
</dbReference>
<dbReference type="PROSITE" id="PS00198">
    <property type="entry name" value="4FE4S_FER_1"/>
    <property type="match status" value="2"/>
</dbReference>
<dbReference type="PROSITE" id="PS51379">
    <property type="entry name" value="4FE4S_FER_2"/>
    <property type="match status" value="2"/>
</dbReference>
<protein>
    <recommendedName>
        <fullName evidence="1">NAD(P)H-quinone oxidoreductase subunit I, chloroplastic</fullName>
        <ecNumber evidence="1">7.1.1.-</ecNumber>
    </recommendedName>
    <alternativeName>
        <fullName evidence="1">NAD(P)H dehydrogenase subunit I</fullName>
        <shortName evidence="1">NDH subunit I</shortName>
    </alternativeName>
    <alternativeName>
        <fullName evidence="1">NADH-plastoquinone oxidoreductase subunit I</fullName>
    </alternativeName>
</protein>
<comment type="function">
    <text evidence="1">NDH shuttles electrons from NAD(P)H:plastoquinone, via FMN and iron-sulfur (Fe-S) centers, to quinones in the photosynthetic chain and possibly in a chloroplast respiratory chain. The immediate electron acceptor for the enzyme in this species is believed to be plastoquinone. Couples the redox reaction to proton translocation, and thus conserves the redox energy in a proton gradient.</text>
</comment>
<comment type="catalytic activity">
    <reaction evidence="1">
        <text>a plastoquinone + NADH + (n+1) H(+)(in) = a plastoquinol + NAD(+) + n H(+)(out)</text>
        <dbReference type="Rhea" id="RHEA:42608"/>
        <dbReference type="Rhea" id="RHEA-COMP:9561"/>
        <dbReference type="Rhea" id="RHEA-COMP:9562"/>
        <dbReference type="ChEBI" id="CHEBI:15378"/>
        <dbReference type="ChEBI" id="CHEBI:17757"/>
        <dbReference type="ChEBI" id="CHEBI:57540"/>
        <dbReference type="ChEBI" id="CHEBI:57945"/>
        <dbReference type="ChEBI" id="CHEBI:62192"/>
    </reaction>
</comment>
<comment type="catalytic activity">
    <reaction evidence="1">
        <text>a plastoquinone + NADPH + (n+1) H(+)(in) = a plastoquinol + NADP(+) + n H(+)(out)</text>
        <dbReference type="Rhea" id="RHEA:42612"/>
        <dbReference type="Rhea" id="RHEA-COMP:9561"/>
        <dbReference type="Rhea" id="RHEA-COMP:9562"/>
        <dbReference type="ChEBI" id="CHEBI:15378"/>
        <dbReference type="ChEBI" id="CHEBI:17757"/>
        <dbReference type="ChEBI" id="CHEBI:57783"/>
        <dbReference type="ChEBI" id="CHEBI:58349"/>
        <dbReference type="ChEBI" id="CHEBI:62192"/>
    </reaction>
</comment>
<comment type="cofactor">
    <cofactor evidence="1">
        <name>[4Fe-4S] cluster</name>
        <dbReference type="ChEBI" id="CHEBI:49883"/>
    </cofactor>
    <text evidence="1">Binds 2 [4Fe-4S] clusters per subunit.</text>
</comment>
<comment type="subunit">
    <text evidence="1">NDH is composed of at least 16 different subunits, 5 of which are encoded in the nucleus.</text>
</comment>
<comment type="subcellular location">
    <subcellularLocation>
        <location evidence="1">Plastid</location>
        <location evidence="1">Chloroplast thylakoid membrane</location>
        <topology evidence="1">Peripheral membrane protein</topology>
    </subcellularLocation>
</comment>
<comment type="similarity">
    <text evidence="1">Belongs to the complex I 23 kDa subunit family.</text>
</comment>
<keyword id="KW-0004">4Fe-4S</keyword>
<keyword id="KW-0150">Chloroplast</keyword>
<keyword id="KW-0408">Iron</keyword>
<keyword id="KW-0411">Iron-sulfur</keyword>
<keyword id="KW-0472">Membrane</keyword>
<keyword id="KW-0479">Metal-binding</keyword>
<keyword id="KW-0520">NAD</keyword>
<keyword id="KW-0521">NADP</keyword>
<keyword id="KW-0934">Plastid</keyword>
<keyword id="KW-0618">Plastoquinone</keyword>
<keyword id="KW-0874">Quinone</keyword>
<keyword id="KW-0677">Repeat</keyword>
<keyword id="KW-0793">Thylakoid</keyword>
<keyword id="KW-1278">Translocase</keyword>
<gene>
    <name evidence="1" type="primary">ndhI</name>
</gene>
<evidence type="ECO:0000255" key="1">
    <source>
        <dbReference type="HAMAP-Rule" id="MF_01351"/>
    </source>
</evidence>
<reference key="1">
    <citation type="submission" date="2003-01" db="EMBL/GenBank/DDBJ databases">
        <title>Chloroplast DNA phylogeny of tribe Heliantheae (Asteraceae).</title>
        <authorList>
            <person name="Panero J.L."/>
            <person name="Baldwin B.G."/>
            <person name="Schilling E.E."/>
            <person name="Clevinger J.A."/>
        </authorList>
    </citation>
    <scope>NUCLEOTIDE SEQUENCE [GENOMIC DNA]</scope>
</reference>
<proteinExistence type="inferred from homology"/>
<accession>Q8HVJ2</accession>
<feature type="chain" id="PRO_0000250756" description="NAD(P)H-quinone oxidoreductase subunit I, chloroplastic">
    <location>
        <begin position="1"/>
        <end position="166"/>
    </location>
</feature>
<feature type="domain" description="4Fe-4S ferredoxin-type 1" evidence="1">
    <location>
        <begin position="55"/>
        <end position="84"/>
    </location>
</feature>
<feature type="domain" description="4Fe-4S ferredoxin-type 2" evidence="1">
    <location>
        <begin position="95"/>
        <end position="124"/>
    </location>
</feature>
<feature type="binding site" evidence="1">
    <location>
        <position position="64"/>
    </location>
    <ligand>
        <name>[4Fe-4S] cluster</name>
        <dbReference type="ChEBI" id="CHEBI:49883"/>
        <label>1</label>
    </ligand>
</feature>
<feature type="binding site" evidence="1">
    <location>
        <position position="67"/>
    </location>
    <ligand>
        <name>[4Fe-4S] cluster</name>
        <dbReference type="ChEBI" id="CHEBI:49883"/>
        <label>1</label>
    </ligand>
</feature>
<feature type="binding site" evidence="1">
    <location>
        <position position="70"/>
    </location>
    <ligand>
        <name>[4Fe-4S] cluster</name>
        <dbReference type="ChEBI" id="CHEBI:49883"/>
        <label>1</label>
    </ligand>
</feature>
<feature type="binding site" evidence="1">
    <location>
        <position position="74"/>
    </location>
    <ligand>
        <name>[4Fe-4S] cluster</name>
        <dbReference type="ChEBI" id="CHEBI:49883"/>
        <label>2</label>
    </ligand>
</feature>
<feature type="binding site" evidence="1">
    <location>
        <position position="104"/>
    </location>
    <ligand>
        <name>[4Fe-4S] cluster</name>
        <dbReference type="ChEBI" id="CHEBI:49883"/>
        <label>2</label>
    </ligand>
</feature>
<feature type="binding site" evidence="1">
    <location>
        <position position="107"/>
    </location>
    <ligand>
        <name>[4Fe-4S] cluster</name>
        <dbReference type="ChEBI" id="CHEBI:49883"/>
        <label>2</label>
    </ligand>
</feature>
<feature type="binding site" evidence="1">
    <location>
        <position position="110"/>
    </location>
    <ligand>
        <name>[4Fe-4S] cluster</name>
        <dbReference type="ChEBI" id="CHEBI:49883"/>
        <label>2</label>
    </ligand>
</feature>
<feature type="binding site" evidence="1">
    <location>
        <position position="114"/>
    </location>
    <ligand>
        <name>[4Fe-4S] cluster</name>
        <dbReference type="ChEBI" id="CHEBI:49883"/>
        <label>1</label>
    </ligand>
</feature>
<name>NDHI_ARNDE</name>
<organism>
    <name type="scientific">Arnica dealbata</name>
    <name type="common">Mock leopardbane</name>
    <name type="synonym">Whitneya dealbata</name>
    <dbReference type="NCBI Taxonomy" id="149409"/>
    <lineage>
        <taxon>Eukaryota</taxon>
        <taxon>Viridiplantae</taxon>
        <taxon>Streptophyta</taxon>
        <taxon>Embryophyta</taxon>
        <taxon>Tracheophyta</taxon>
        <taxon>Spermatophyta</taxon>
        <taxon>Magnoliopsida</taxon>
        <taxon>eudicotyledons</taxon>
        <taxon>Gunneridae</taxon>
        <taxon>Pentapetalae</taxon>
        <taxon>asterids</taxon>
        <taxon>campanulids</taxon>
        <taxon>Asterales</taxon>
        <taxon>Asteraceae</taxon>
        <taxon>Asteroideae</taxon>
        <taxon>Heliantheae alliance</taxon>
        <taxon>Madieae</taxon>
        <taxon>Arnicinae</taxon>
        <taxon>Arnica</taxon>
    </lineage>
</organism>
<sequence length="166" mass="19475">MFPMVTEFMNYGQQTVRAARYIGQGFMITLSHANRLPVTIQYPYEKLITSERFRGRIHFEFDKCIACEVCVRVCPIDLPVVDWKLETDIRKKRLLNYSIDFGICIFCGNCVEYCPTNCLSMTEEYELSTYDRHELNYNQIALGRLPMSIIDDYTIRTILNLPEIKT</sequence>